<sequence>MPTINQLVRKPRQSKVVKSKSPALNVGYNSHKKVQTNVSSPQKRGVATRVGTMTPKKPNSALRKFARVRLSNLIEVTAYIPGIGHNLQEHSVVLIRGGRVKDLPGVRYHIVRGALDTAGVADRKQSRSKYGAKRPKG</sequence>
<protein>
    <recommendedName>
        <fullName evidence="2">Small ribosomal subunit protein uS12</fullName>
    </recommendedName>
    <alternativeName>
        <fullName evidence="4">30S ribosomal protein S12</fullName>
    </alternativeName>
</protein>
<accession>Q5LY19</accession>
<comment type="function">
    <text evidence="2">With S4 and S5 plays an important role in translational accuracy.</text>
</comment>
<comment type="function">
    <text evidence="2">Interacts with and stabilizes bases of the 16S rRNA that are involved in tRNA selection in the A site and with the mRNA backbone. Located at the interface of the 30S and 50S subunits, it traverses the body of the 30S subunit contacting proteins on the other side and probably holding the rRNA structure together. The combined cluster of proteins S8, S12 and S17 appears to hold together the shoulder and platform of the 30S subunit.</text>
</comment>
<comment type="subunit">
    <text evidence="2">Part of the 30S ribosomal subunit. Contacts proteins S8 and S17. May interact with IF1 in the 30S initiation complex.</text>
</comment>
<comment type="similarity">
    <text evidence="2">Belongs to the universal ribosomal protein uS12 family.</text>
</comment>
<reference key="1">
    <citation type="journal article" date="2004" name="Nat. Biotechnol.">
        <title>Complete sequence and comparative genome analysis of the dairy bacterium Streptococcus thermophilus.</title>
        <authorList>
            <person name="Bolotin A."/>
            <person name="Quinquis B."/>
            <person name="Renault P."/>
            <person name="Sorokin A."/>
            <person name="Ehrlich S.D."/>
            <person name="Kulakauskas S."/>
            <person name="Lapidus A."/>
            <person name="Goltsman E."/>
            <person name="Mazur M."/>
            <person name="Pusch G.D."/>
            <person name="Fonstein M."/>
            <person name="Overbeek R."/>
            <person name="Kyprides N."/>
            <person name="Purnelle B."/>
            <person name="Prozzi D."/>
            <person name="Ngui K."/>
            <person name="Masuy D."/>
            <person name="Hancy F."/>
            <person name="Burteau S."/>
            <person name="Boutry M."/>
            <person name="Delcour J."/>
            <person name="Goffeau A."/>
            <person name="Hols P."/>
        </authorList>
    </citation>
    <scope>NUCLEOTIDE SEQUENCE [LARGE SCALE GENOMIC DNA]</scope>
    <source>
        <strain>CNRZ 1066</strain>
    </source>
</reference>
<feature type="chain" id="PRO_0000146331" description="Small ribosomal subunit protein uS12">
    <location>
        <begin position="1"/>
        <end position="137"/>
    </location>
</feature>
<feature type="region of interest" description="Disordered" evidence="3">
    <location>
        <begin position="33"/>
        <end position="57"/>
    </location>
</feature>
<feature type="modified residue" description="3-methylthioaspartic acid" evidence="1">
    <location>
        <position position="102"/>
    </location>
</feature>
<proteinExistence type="inferred from homology"/>
<name>RS12_STRT1</name>
<organism>
    <name type="scientific">Streptococcus thermophilus (strain CNRZ 1066)</name>
    <dbReference type="NCBI Taxonomy" id="299768"/>
    <lineage>
        <taxon>Bacteria</taxon>
        <taxon>Bacillati</taxon>
        <taxon>Bacillota</taxon>
        <taxon>Bacilli</taxon>
        <taxon>Lactobacillales</taxon>
        <taxon>Streptococcaceae</taxon>
        <taxon>Streptococcus</taxon>
    </lineage>
</organism>
<evidence type="ECO:0000250" key="1"/>
<evidence type="ECO:0000255" key="2">
    <source>
        <dbReference type="HAMAP-Rule" id="MF_00403"/>
    </source>
</evidence>
<evidence type="ECO:0000256" key="3">
    <source>
        <dbReference type="SAM" id="MobiDB-lite"/>
    </source>
</evidence>
<evidence type="ECO:0000305" key="4"/>
<keyword id="KW-0488">Methylation</keyword>
<keyword id="KW-0687">Ribonucleoprotein</keyword>
<keyword id="KW-0689">Ribosomal protein</keyword>
<keyword id="KW-0694">RNA-binding</keyword>
<keyword id="KW-0699">rRNA-binding</keyword>
<keyword id="KW-0820">tRNA-binding</keyword>
<dbReference type="EMBL" id="CP000024">
    <property type="protein sequence ID" value="AAV63308.1"/>
    <property type="molecule type" value="Genomic_DNA"/>
</dbReference>
<dbReference type="RefSeq" id="WP_002884809.1">
    <property type="nucleotide sequence ID" value="NC_006449.1"/>
</dbReference>
<dbReference type="SMR" id="Q5LY19"/>
<dbReference type="GeneID" id="93792954"/>
<dbReference type="KEGG" id="stc:str1791"/>
<dbReference type="HOGENOM" id="CLU_104295_1_2_9"/>
<dbReference type="GO" id="GO:0015935">
    <property type="term" value="C:small ribosomal subunit"/>
    <property type="evidence" value="ECO:0007669"/>
    <property type="project" value="InterPro"/>
</dbReference>
<dbReference type="GO" id="GO:0019843">
    <property type="term" value="F:rRNA binding"/>
    <property type="evidence" value="ECO:0007669"/>
    <property type="project" value="UniProtKB-UniRule"/>
</dbReference>
<dbReference type="GO" id="GO:0003735">
    <property type="term" value="F:structural constituent of ribosome"/>
    <property type="evidence" value="ECO:0007669"/>
    <property type="project" value="InterPro"/>
</dbReference>
<dbReference type="GO" id="GO:0000049">
    <property type="term" value="F:tRNA binding"/>
    <property type="evidence" value="ECO:0007669"/>
    <property type="project" value="UniProtKB-UniRule"/>
</dbReference>
<dbReference type="GO" id="GO:0006412">
    <property type="term" value="P:translation"/>
    <property type="evidence" value="ECO:0007669"/>
    <property type="project" value="UniProtKB-UniRule"/>
</dbReference>
<dbReference type="CDD" id="cd03368">
    <property type="entry name" value="Ribosomal_S12"/>
    <property type="match status" value="1"/>
</dbReference>
<dbReference type="FunFam" id="2.40.50.140:FF:000001">
    <property type="entry name" value="30S ribosomal protein S12"/>
    <property type="match status" value="1"/>
</dbReference>
<dbReference type="Gene3D" id="2.40.50.140">
    <property type="entry name" value="Nucleic acid-binding proteins"/>
    <property type="match status" value="1"/>
</dbReference>
<dbReference type="HAMAP" id="MF_00403_B">
    <property type="entry name" value="Ribosomal_uS12_B"/>
    <property type="match status" value="1"/>
</dbReference>
<dbReference type="InterPro" id="IPR012340">
    <property type="entry name" value="NA-bd_OB-fold"/>
</dbReference>
<dbReference type="InterPro" id="IPR006032">
    <property type="entry name" value="Ribosomal_uS12"/>
</dbReference>
<dbReference type="InterPro" id="IPR005679">
    <property type="entry name" value="Ribosomal_uS12_bac"/>
</dbReference>
<dbReference type="NCBIfam" id="TIGR00981">
    <property type="entry name" value="rpsL_bact"/>
    <property type="match status" value="1"/>
</dbReference>
<dbReference type="PANTHER" id="PTHR11652">
    <property type="entry name" value="30S RIBOSOMAL PROTEIN S12 FAMILY MEMBER"/>
    <property type="match status" value="1"/>
</dbReference>
<dbReference type="Pfam" id="PF00164">
    <property type="entry name" value="Ribosom_S12_S23"/>
    <property type="match status" value="1"/>
</dbReference>
<dbReference type="PIRSF" id="PIRSF002133">
    <property type="entry name" value="Ribosomal_S12/S23"/>
    <property type="match status" value="1"/>
</dbReference>
<dbReference type="PRINTS" id="PR01034">
    <property type="entry name" value="RIBOSOMALS12"/>
</dbReference>
<dbReference type="SUPFAM" id="SSF50249">
    <property type="entry name" value="Nucleic acid-binding proteins"/>
    <property type="match status" value="1"/>
</dbReference>
<dbReference type="PROSITE" id="PS00055">
    <property type="entry name" value="RIBOSOMAL_S12"/>
    <property type="match status" value="1"/>
</dbReference>
<gene>
    <name evidence="2" type="primary">rpsL</name>
    <name type="ordered locus">str1791</name>
</gene>